<accession>Q6BY07</accession>
<reference key="1">
    <citation type="journal article" date="2004" name="Nature">
        <title>Genome evolution in yeasts.</title>
        <authorList>
            <person name="Dujon B."/>
            <person name="Sherman D."/>
            <person name="Fischer G."/>
            <person name="Durrens P."/>
            <person name="Casaregola S."/>
            <person name="Lafontaine I."/>
            <person name="de Montigny J."/>
            <person name="Marck C."/>
            <person name="Neuveglise C."/>
            <person name="Talla E."/>
            <person name="Goffard N."/>
            <person name="Frangeul L."/>
            <person name="Aigle M."/>
            <person name="Anthouard V."/>
            <person name="Babour A."/>
            <person name="Barbe V."/>
            <person name="Barnay S."/>
            <person name="Blanchin S."/>
            <person name="Beckerich J.-M."/>
            <person name="Beyne E."/>
            <person name="Bleykasten C."/>
            <person name="Boisrame A."/>
            <person name="Boyer J."/>
            <person name="Cattolico L."/>
            <person name="Confanioleri F."/>
            <person name="de Daruvar A."/>
            <person name="Despons L."/>
            <person name="Fabre E."/>
            <person name="Fairhead C."/>
            <person name="Ferry-Dumazet H."/>
            <person name="Groppi A."/>
            <person name="Hantraye F."/>
            <person name="Hennequin C."/>
            <person name="Jauniaux N."/>
            <person name="Joyet P."/>
            <person name="Kachouri R."/>
            <person name="Kerrest A."/>
            <person name="Koszul R."/>
            <person name="Lemaire M."/>
            <person name="Lesur I."/>
            <person name="Ma L."/>
            <person name="Muller H."/>
            <person name="Nicaud J.-M."/>
            <person name="Nikolski M."/>
            <person name="Oztas S."/>
            <person name="Ozier-Kalogeropoulos O."/>
            <person name="Pellenz S."/>
            <person name="Potier S."/>
            <person name="Richard G.-F."/>
            <person name="Straub M.-L."/>
            <person name="Suleau A."/>
            <person name="Swennen D."/>
            <person name="Tekaia F."/>
            <person name="Wesolowski-Louvel M."/>
            <person name="Westhof E."/>
            <person name="Wirth B."/>
            <person name="Zeniou-Meyer M."/>
            <person name="Zivanovic Y."/>
            <person name="Bolotin-Fukuhara M."/>
            <person name="Thierry A."/>
            <person name="Bouchier C."/>
            <person name="Caudron B."/>
            <person name="Scarpelli C."/>
            <person name="Gaillardin C."/>
            <person name="Weissenbach J."/>
            <person name="Wincker P."/>
            <person name="Souciet J.-L."/>
        </authorList>
    </citation>
    <scope>NUCLEOTIDE SEQUENCE [LARGE SCALE GENOMIC DNA]</scope>
    <source>
        <strain>ATCC 36239 / CBS 767 / BCRC 21394 / JCM 1990 / NBRC 0083 / IGC 2968</strain>
    </source>
</reference>
<organism>
    <name type="scientific">Debaryomyces hansenii (strain ATCC 36239 / CBS 767 / BCRC 21394 / JCM 1990 / NBRC 0083 / IGC 2968)</name>
    <name type="common">Yeast</name>
    <name type="synonym">Torulaspora hansenii</name>
    <dbReference type="NCBI Taxonomy" id="284592"/>
    <lineage>
        <taxon>Eukaryota</taxon>
        <taxon>Fungi</taxon>
        <taxon>Dikarya</taxon>
        <taxon>Ascomycota</taxon>
        <taxon>Saccharomycotina</taxon>
        <taxon>Pichiomycetes</taxon>
        <taxon>Debaryomycetaceae</taxon>
        <taxon>Debaryomyces</taxon>
    </lineage>
</organism>
<name>MVD1_DEBHA</name>
<keyword id="KW-0067">ATP-binding</keyword>
<keyword id="KW-0444">Lipid biosynthesis</keyword>
<keyword id="KW-0443">Lipid metabolism</keyword>
<keyword id="KW-0456">Lyase</keyword>
<keyword id="KW-0547">Nucleotide-binding</keyword>
<keyword id="KW-1185">Reference proteome</keyword>
<keyword id="KW-0752">Steroid biosynthesis</keyword>
<keyword id="KW-0753">Steroid metabolism</keyword>
<keyword id="KW-0756">Sterol biosynthesis</keyword>
<keyword id="KW-1207">Sterol metabolism</keyword>
<dbReference type="EC" id="4.1.1.33" evidence="2"/>
<dbReference type="EMBL" id="CR382133">
    <property type="protein sequence ID" value="CAG84889.2"/>
    <property type="molecule type" value="Genomic_DNA"/>
</dbReference>
<dbReference type="RefSeq" id="XP_456912.2">
    <property type="nucleotide sequence ID" value="XM_456912.1"/>
</dbReference>
<dbReference type="SMR" id="Q6BY07"/>
<dbReference type="FunCoup" id="Q6BY07">
    <property type="interactions" value="724"/>
</dbReference>
<dbReference type="STRING" id="284592.Q6BY07"/>
<dbReference type="GeneID" id="2899434"/>
<dbReference type="KEGG" id="dha:DEHA2A13398g"/>
<dbReference type="VEuPathDB" id="FungiDB:DEHA2A13398g"/>
<dbReference type="eggNOG" id="KOG2833">
    <property type="taxonomic scope" value="Eukaryota"/>
</dbReference>
<dbReference type="HOGENOM" id="CLU_040369_4_2_1"/>
<dbReference type="InParanoid" id="Q6BY07"/>
<dbReference type="OMA" id="LTLHAMM"/>
<dbReference type="OrthoDB" id="10253702at2759"/>
<dbReference type="UniPathway" id="UPA00057">
    <property type="reaction ID" value="UER00100"/>
</dbReference>
<dbReference type="Proteomes" id="UP000000599">
    <property type="component" value="Chromosome A"/>
</dbReference>
<dbReference type="GO" id="GO:0005829">
    <property type="term" value="C:cytosol"/>
    <property type="evidence" value="ECO:0007669"/>
    <property type="project" value="InterPro"/>
</dbReference>
<dbReference type="GO" id="GO:0005524">
    <property type="term" value="F:ATP binding"/>
    <property type="evidence" value="ECO:0007669"/>
    <property type="project" value="UniProtKB-KW"/>
</dbReference>
<dbReference type="GO" id="GO:0004163">
    <property type="term" value="F:diphosphomevalonate decarboxylase activity"/>
    <property type="evidence" value="ECO:0007669"/>
    <property type="project" value="UniProtKB-EC"/>
</dbReference>
<dbReference type="GO" id="GO:0006696">
    <property type="term" value="P:ergosterol biosynthetic process"/>
    <property type="evidence" value="ECO:0007669"/>
    <property type="project" value="EnsemblFungi"/>
</dbReference>
<dbReference type="GO" id="GO:0019287">
    <property type="term" value="P:isopentenyl diphosphate biosynthetic process, mevalonate pathway"/>
    <property type="evidence" value="ECO:0007669"/>
    <property type="project" value="UniProtKB-UniPathway"/>
</dbReference>
<dbReference type="FunFam" id="3.30.230.10:FF:000018">
    <property type="entry name" value="Diphosphomevalonate decarboxylase"/>
    <property type="match status" value="1"/>
</dbReference>
<dbReference type="FunFam" id="3.30.70.890:FF:000005">
    <property type="entry name" value="Diphosphomevalonate decarboxylase"/>
    <property type="match status" value="1"/>
</dbReference>
<dbReference type="Gene3D" id="3.30.230.10">
    <property type="match status" value="1"/>
</dbReference>
<dbReference type="Gene3D" id="3.30.70.890">
    <property type="entry name" value="GHMP kinase, C-terminal domain"/>
    <property type="match status" value="1"/>
</dbReference>
<dbReference type="InterPro" id="IPR036554">
    <property type="entry name" value="GHMP_kinase_C_sf"/>
</dbReference>
<dbReference type="InterPro" id="IPR005935">
    <property type="entry name" value="Mev_decarb"/>
</dbReference>
<dbReference type="InterPro" id="IPR029765">
    <property type="entry name" value="Mev_diP_decarb"/>
</dbReference>
<dbReference type="InterPro" id="IPR053859">
    <property type="entry name" value="MVD-like_N"/>
</dbReference>
<dbReference type="InterPro" id="IPR041431">
    <property type="entry name" value="Mvd1_C"/>
</dbReference>
<dbReference type="InterPro" id="IPR020568">
    <property type="entry name" value="Ribosomal_Su5_D2-typ_SF"/>
</dbReference>
<dbReference type="InterPro" id="IPR014721">
    <property type="entry name" value="Ribsml_uS5_D2-typ_fold_subgr"/>
</dbReference>
<dbReference type="NCBIfam" id="TIGR01240">
    <property type="entry name" value="mevDPdecarb"/>
    <property type="match status" value="1"/>
</dbReference>
<dbReference type="PANTHER" id="PTHR10977">
    <property type="entry name" value="DIPHOSPHOMEVALONATE DECARBOXYLASE"/>
    <property type="match status" value="1"/>
</dbReference>
<dbReference type="PANTHER" id="PTHR10977:SF3">
    <property type="entry name" value="DIPHOSPHOMEVALONATE DECARBOXYLASE"/>
    <property type="match status" value="1"/>
</dbReference>
<dbReference type="Pfam" id="PF18376">
    <property type="entry name" value="MDD_C"/>
    <property type="match status" value="1"/>
</dbReference>
<dbReference type="Pfam" id="PF22700">
    <property type="entry name" value="MVD-like_N"/>
    <property type="match status" value="1"/>
</dbReference>
<dbReference type="PIRSF" id="PIRSF015950">
    <property type="entry name" value="Mev_P_decrbx"/>
    <property type="match status" value="1"/>
</dbReference>
<dbReference type="SUPFAM" id="SSF55060">
    <property type="entry name" value="GHMP Kinase, C-terminal domain"/>
    <property type="match status" value="1"/>
</dbReference>
<dbReference type="SUPFAM" id="SSF54211">
    <property type="entry name" value="Ribosomal protein S5 domain 2-like"/>
    <property type="match status" value="1"/>
</dbReference>
<feature type="chain" id="PRO_0000310440" description="Diphosphomevalonate decarboxylase">
    <location>
        <begin position="1"/>
        <end position="388"/>
    </location>
</feature>
<feature type="region of interest" description="Disordered" evidence="3">
    <location>
        <begin position="367"/>
        <end position="388"/>
    </location>
</feature>
<feature type="binding site" evidence="1">
    <location>
        <begin position="19"/>
        <end position="22"/>
    </location>
    <ligand>
        <name>(R)-5-diphosphomevalonate</name>
        <dbReference type="ChEBI" id="CHEBI:57557"/>
    </ligand>
</feature>
<feature type="binding site" evidence="1">
    <location>
        <position position="74"/>
    </location>
    <ligand>
        <name>(R)-5-diphosphomevalonate</name>
        <dbReference type="ChEBI" id="CHEBI:57557"/>
    </ligand>
</feature>
<feature type="binding site" evidence="1">
    <location>
        <begin position="153"/>
        <end position="158"/>
    </location>
    <ligand>
        <name>(R)-5-diphosphomevalonate</name>
        <dbReference type="ChEBI" id="CHEBI:57557"/>
    </ligand>
</feature>
<feature type="binding site" evidence="1">
    <location>
        <position position="209"/>
    </location>
    <ligand>
        <name>(R)-5-diphosphomevalonate</name>
        <dbReference type="ChEBI" id="CHEBI:57557"/>
    </ligand>
</feature>
<proteinExistence type="inferred from homology"/>
<evidence type="ECO:0000250" key="1">
    <source>
        <dbReference type="UniProtKB" id="O23722"/>
    </source>
</evidence>
<evidence type="ECO:0000250" key="2">
    <source>
        <dbReference type="UniProtKB" id="P32377"/>
    </source>
</evidence>
<evidence type="ECO:0000256" key="3">
    <source>
        <dbReference type="SAM" id="MobiDB-lite"/>
    </source>
</evidence>
<evidence type="ECO:0000305" key="4"/>
<comment type="function">
    <text evidence="2">Diphosphomevalonate decarboxylase; part of the second module of ergosterol biosynthesis pathway that includes the middle steps of the pathway (By similarity). The second module is carried out in the vacuole and involves the formation of farnesyl diphosphate, which is also an important intermediate in the biosynthesis of ubiquinone, dolichol, heme and prenylated proteins (By similarity). Activity by the mevalonate kinase ERG12 first converts mevalonate into 5-phosphomevalonate. 5-phosphomevalonate is then further converted to 5-diphosphomevalonate by the phosphomevalonate kinase ERG8 (By similarity). The diphosphomevalonate decarboxylase MVD1/ERG19 then produces isopentenyl diphosphate (By similarity). The isopentenyl-diphosphate delta-isomerase IDI1 then catalyzes the 1,3-allylic rearrangement of the homoallylic substrate isopentenyl (IPP) to its highly electrophilic allylic isomer, dimethylallyl diphosphate (DMAPP) (By similarity). Finally the farnesyl diphosphate synthase ERG20 catalyzes the sequential condensation of isopentenyl pyrophosphate with dimethylallyl pyrophosphate, and then with the resultant geranylpyrophosphate to the ultimate product farnesyl pyrophosphate (By similarity).</text>
</comment>
<comment type="catalytic activity">
    <reaction evidence="2">
        <text>(R)-5-diphosphomevalonate + ATP = isopentenyl diphosphate + ADP + phosphate + CO2</text>
        <dbReference type="Rhea" id="RHEA:23732"/>
        <dbReference type="ChEBI" id="CHEBI:16526"/>
        <dbReference type="ChEBI" id="CHEBI:30616"/>
        <dbReference type="ChEBI" id="CHEBI:43474"/>
        <dbReference type="ChEBI" id="CHEBI:57557"/>
        <dbReference type="ChEBI" id="CHEBI:128769"/>
        <dbReference type="ChEBI" id="CHEBI:456216"/>
        <dbReference type="EC" id="4.1.1.33"/>
    </reaction>
    <physiologicalReaction direction="left-to-right" evidence="2">
        <dbReference type="Rhea" id="RHEA:23733"/>
    </physiologicalReaction>
</comment>
<comment type="pathway">
    <text evidence="2">Isoprenoid biosynthesis; isopentenyl diphosphate biosynthesis via mevalonate pathway; isopentenyl diphosphate from (R)-mevalonate: step 3/3.</text>
</comment>
<comment type="subunit">
    <text evidence="2">Homodimer.</text>
</comment>
<comment type="similarity">
    <text evidence="4">Belongs to the diphosphomevalonate decarboxylase family.</text>
</comment>
<sequence>MTVYTSSATAPVNIATLKYWGKRDKSLNLPTNSSISVTLSQNDLRTLTSVAASEDFKEDKLWLNGKLESLESERTKACLADLRTLRKELESNDSSIPKLSQFGVHIVSENNFPTAAGLASSAAGFAALVVSIAKLYELPQNMSEISKIARKGSGSACRSLFGGYVAWEMGQETNGEDSKAVEVAPLSHWPNMKAAILVVSDDKKDTPSTSGMQTTVATSDLFQWRIKEVVPKRFDDMKDSILRKDFATFGDLTMKDSNSFHAVCLDSTPPIFYLNDTSKKIIKLIHELNKREGKIIAAYTFDAGPNAVIYYEQENESKVLGVIYKYFSKVSGWEKLDTKTLDTTSDIQADPELYKGVSKIILTEVGQGPQGSSESLINDKGLPKAVAN</sequence>
<protein>
    <recommendedName>
        <fullName evidence="2">Diphosphomevalonate decarboxylase</fullName>
        <ecNumber evidence="2">4.1.1.33</ecNumber>
    </recommendedName>
    <alternativeName>
        <fullName evidence="2">Ergosterol biosynthesis protein 19</fullName>
    </alternativeName>
    <alternativeName>
        <fullName evidence="2">Mevalonate pyrophosphate decarboxylase</fullName>
        <shortName evidence="2">MPD</shortName>
    </alternativeName>
    <alternativeName>
        <fullName evidence="2">Mevalonate-5-diphosphate decarboxylase</fullName>
        <shortName evidence="2">MDD</shortName>
        <shortName evidence="2">MDDase</shortName>
    </alternativeName>
</protein>
<gene>
    <name evidence="2" type="primary">MVD1</name>
    <name type="ordered locus">DEHA2A13398g</name>
</gene>